<name>RF1_PROMH</name>
<gene>
    <name evidence="1" type="primary">prfA</name>
    <name type="ordered locus">PMI1087</name>
</gene>
<sequence length="360" mass="40557">MKPSIVAKLEALQERYEEIQALLAEADVIASQERFRALSKEYAQLTDITSCYRQWRKVQDDMEAAEMMLDDPEMKEMAQEELKEAQSVNEELEQQLQVLLLPKDPDDEFNCFLEIRAGTGGDEAALFAGDLFRMYSRYAEARRWRIEVMNANEGEHGGYKEIIAKVIGDGAYGVLKFESGGHRVQRVPETESQGRIHTSACTVAVLPEVPEAELPEISPSDLRIDTFRSSGAGGQHVNTTDSAIRITHIPTGIVVECQDERSQHKNKAKAMSVLGARIRAAEVQKRQEAEASERRNLLGSGDRSDRIRTYNFPQGRVTDHRINLTLYRLDEVMEGKLDALIQPIVTEYQADQLSALSEQD</sequence>
<feature type="chain" id="PRO_1000093490" description="Peptide chain release factor 1">
    <location>
        <begin position="1"/>
        <end position="360"/>
    </location>
</feature>
<feature type="region of interest" description="Disordered" evidence="2">
    <location>
        <begin position="285"/>
        <end position="305"/>
    </location>
</feature>
<feature type="modified residue" description="N5-methylglutamine" evidence="1">
    <location>
        <position position="235"/>
    </location>
</feature>
<proteinExistence type="inferred from homology"/>
<dbReference type="EMBL" id="AM942759">
    <property type="protein sequence ID" value="CAR42344.1"/>
    <property type="molecule type" value="Genomic_DNA"/>
</dbReference>
<dbReference type="RefSeq" id="WP_012367851.1">
    <property type="nucleotide sequence ID" value="NC_010554.1"/>
</dbReference>
<dbReference type="SMR" id="B4EVR7"/>
<dbReference type="EnsemblBacteria" id="CAR42344">
    <property type="protein sequence ID" value="CAR42344"/>
    <property type="gene ID" value="PMI1087"/>
</dbReference>
<dbReference type="GeneID" id="6801441"/>
<dbReference type="KEGG" id="pmr:PMI1087"/>
<dbReference type="PATRIC" id="fig|529507.6.peg.1051"/>
<dbReference type="eggNOG" id="COG0216">
    <property type="taxonomic scope" value="Bacteria"/>
</dbReference>
<dbReference type="HOGENOM" id="CLU_036856_0_1_6"/>
<dbReference type="Proteomes" id="UP000008319">
    <property type="component" value="Chromosome"/>
</dbReference>
<dbReference type="GO" id="GO:0005737">
    <property type="term" value="C:cytoplasm"/>
    <property type="evidence" value="ECO:0007669"/>
    <property type="project" value="UniProtKB-SubCell"/>
</dbReference>
<dbReference type="GO" id="GO:0016149">
    <property type="term" value="F:translation release factor activity, codon specific"/>
    <property type="evidence" value="ECO:0007669"/>
    <property type="project" value="UniProtKB-UniRule"/>
</dbReference>
<dbReference type="FunFam" id="3.30.160.20:FF:000004">
    <property type="entry name" value="Peptide chain release factor 1"/>
    <property type="match status" value="1"/>
</dbReference>
<dbReference type="FunFam" id="3.30.70.1660:FF:000002">
    <property type="entry name" value="Peptide chain release factor 1"/>
    <property type="match status" value="1"/>
</dbReference>
<dbReference type="FunFam" id="3.30.70.1660:FF:000004">
    <property type="entry name" value="Peptide chain release factor 1"/>
    <property type="match status" value="1"/>
</dbReference>
<dbReference type="Gene3D" id="3.30.160.20">
    <property type="match status" value="1"/>
</dbReference>
<dbReference type="Gene3D" id="3.30.70.1660">
    <property type="match status" value="1"/>
</dbReference>
<dbReference type="Gene3D" id="6.10.140.1950">
    <property type="match status" value="1"/>
</dbReference>
<dbReference type="HAMAP" id="MF_00093">
    <property type="entry name" value="Rel_fac_1"/>
    <property type="match status" value="1"/>
</dbReference>
<dbReference type="InterPro" id="IPR005139">
    <property type="entry name" value="PCRF"/>
</dbReference>
<dbReference type="InterPro" id="IPR000352">
    <property type="entry name" value="Pep_chain_release_fac_I"/>
</dbReference>
<dbReference type="InterPro" id="IPR045853">
    <property type="entry name" value="Pep_chain_release_fac_I_sf"/>
</dbReference>
<dbReference type="InterPro" id="IPR050057">
    <property type="entry name" value="Prokaryotic/Mito_RF"/>
</dbReference>
<dbReference type="InterPro" id="IPR004373">
    <property type="entry name" value="RF-1"/>
</dbReference>
<dbReference type="NCBIfam" id="TIGR00019">
    <property type="entry name" value="prfA"/>
    <property type="match status" value="1"/>
</dbReference>
<dbReference type="NCBIfam" id="NF001859">
    <property type="entry name" value="PRK00591.1"/>
    <property type="match status" value="1"/>
</dbReference>
<dbReference type="PANTHER" id="PTHR43804">
    <property type="entry name" value="LD18447P"/>
    <property type="match status" value="1"/>
</dbReference>
<dbReference type="PANTHER" id="PTHR43804:SF7">
    <property type="entry name" value="LD18447P"/>
    <property type="match status" value="1"/>
</dbReference>
<dbReference type="Pfam" id="PF03462">
    <property type="entry name" value="PCRF"/>
    <property type="match status" value="1"/>
</dbReference>
<dbReference type="Pfam" id="PF00472">
    <property type="entry name" value="RF-1"/>
    <property type="match status" value="1"/>
</dbReference>
<dbReference type="SMART" id="SM00937">
    <property type="entry name" value="PCRF"/>
    <property type="match status" value="1"/>
</dbReference>
<dbReference type="SUPFAM" id="SSF75620">
    <property type="entry name" value="Release factor"/>
    <property type="match status" value="1"/>
</dbReference>
<dbReference type="PROSITE" id="PS00745">
    <property type="entry name" value="RF_PROK_I"/>
    <property type="match status" value="1"/>
</dbReference>
<reference key="1">
    <citation type="journal article" date="2008" name="J. Bacteriol.">
        <title>Complete genome sequence of uropathogenic Proteus mirabilis, a master of both adherence and motility.</title>
        <authorList>
            <person name="Pearson M.M."/>
            <person name="Sebaihia M."/>
            <person name="Churcher C."/>
            <person name="Quail M.A."/>
            <person name="Seshasayee A.S."/>
            <person name="Luscombe N.M."/>
            <person name="Abdellah Z."/>
            <person name="Arrosmith C."/>
            <person name="Atkin B."/>
            <person name="Chillingworth T."/>
            <person name="Hauser H."/>
            <person name="Jagels K."/>
            <person name="Moule S."/>
            <person name="Mungall K."/>
            <person name="Norbertczak H."/>
            <person name="Rabbinowitsch E."/>
            <person name="Walker D."/>
            <person name="Whithead S."/>
            <person name="Thomson N.R."/>
            <person name="Rather P.N."/>
            <person name="Parkhill J."/>
            <person name="Mobley H.L.T."/>
        </authorList>
    </citation>
    <scope>NUCLEOTIDE SEQUENCE [LARGE SCALE GENOMIC DNA]</scope>
    <source>
        <strain>HI4320</strain>
    </source>
</reference>
<comment type="function">
    <text evidence="1">Peptide chain release factor 1 directs the termination of translation in response to the peptide chain termination codons UAG and UAA.</text>
</comment>
<comment type="subcellular location">
    <subcellularLocation>
        <location evidence="1">Cytoplasm</location>
    </subcellularLocation>
</comment>
<comment type="PTM">
    <text evidence="1">Methylated by PrmC. Methylation increases the termination efficiency of RF1.</text>
</comment>
<comment type="similarity">
    <text evidence="1">Belongs to the prokaryotic/mitochondrial release factor family.</text>
</comment>
<accession>B4EVR7</accession>
<keyword id="KW-0963">Cytoplasm</keyword>
<keyword id="KW-0488">Methylation</keyword>
<keyword id="KW-0648">Protein biosynthesis</keyword>
<keyword id="KW-1185">Reference proteome</keyword>
<protein>
    <recommendedName>
        <fullName evidence="1">Peptide chain release factor 1</fullName>
        <shortName evidence="1">RF-1</shortName>
    </recommendedName>
</protein>
<organism>
    <name type="scientific">Proteus mirabilis (strain HI4320)</name>
    <dbReference type="NCBI Taxonomy" id="529507"/>
    <lineage>
        <taxon>Bacteria</taxon>
        <taxon>Pseudomonadati</taxon>
        <taxon>Pseudomonadota</taxon>
        <taxon>Gammaproteobacteria</taxon>
        <taxon>Enterobacterales</taxon>
        <taxon>Morganellaceae</taxon>
        <taxon>Proteus</taxon>
    </lineage>
</organism>
<evidence type="ECO:0000255" key="1">
    <source>
        <dbReference type="HAMAP-Rule" id="MF_00093"/>
    </source>
</evidence>
<evidence type="ECO:0000256" key="2">
    <source>
        <dbReference type="SAM" id="MobiDB-lite"/>
    </source>
</evidence>